<sequence length="49" mass="5871">MRVNITLACTETGDRNYISTKNKRTNPERIELKKYSPRLKKHTLHRETK</sequence>
<organism>
    <name type="scientific">Oceanobacillus iheyensis (strain DSM 14371 / CIP 107618 / JCM 11309 / KCTC 3954 / HTE831)</name>
    <dbReference type="NCBI Taxonomy" id="221109"/>
    <lineage>
        <taxon>Bacteria</taxon>
        <taxon>Bacillati</taxon>
        <taxon>Bacillota</taxon>
        <taxon>Bacilli</taxon>
        <taxon>Bacillales</taxon>
        <taxon>Bacillaceae</taxon>
        <taxon>Oceanobacillus</taxon>
    </lineage>
</organism>
<gene>
    <name evidence="1" type="primary">rpmG2</name>
    <name type="ordered locus">OB1925</name>
</gene>
<accession>Q8EQ04</accession>
<comment type="similarity">
    <text evidence="1">Belongs to the bacterial ribosomal protein bL33 family.</text>
</comment>
<reference key="1">
    <citation type="journal article" date="2002" name="Nucleic Acids Res.">
        <title>Genome sequence of Oceanobacillus iheyensis isolated from the Iheya Ridge and its unexpected adaptive capabilities to extreme environments.</title>
        <authorList>
            <person name="Takami H."/>
            <person name="Takaki Y."/>
            <person name="Uchiyama I."/>
        </authorList>
    </citation>
    <scope>NUCLEOTIDE SEQUENCE [LARGE SCALE GENOMIC DNA]</scope>
    <source>
        <strain>DSM 14371 / CIP 107618 / JCM 11309 / KCTC 3954 / HTE831</strain>
    </source>
</reference>
<dbReference type="EMBL" id="BA000028">
    <property type="protein sequence ID" value="BAC13881.1"/>
    <property type="molecule type" value="Genomic_DNA"/>
</dbReference>
<dbReference type="SMR" id="Q8EQ04"/>
<dbReference type="STRING" id="221109.gene:10734165"/>
<dbReference type="KEGG" id="oih:OB1925"/>
<dbReference type="eggNOG" id="COG0267">
    <property type="taxonomic scope" value="Bacteria"/>
</dbReference>
<dbReference type="HOGENOM" id="CLU_190949_0_1_9"/>
<dbReference type="OrthoDB" id="197660at2"/>
<dbReference type="PhylomeDB" id="Q8EQ04"/>
<dbReference type="Proteomes" id="UP000000822">
    <property type="component" value="Chromosome"/>
</dbReference>
<dbReference type="GO" id="GO:0005737">
    <property type="term" value="C:cytoplasm"/>
    <property type="evidence" value="ECO:0007669"/>
    <property type="project" value="UniProtKB-ARBA"/>
</dbReference>
<dbReference type="GO" id="GO:1990904">
    <property type="term" value="C:ribonucleoprotein complex"/>
    <property type="evidence" value="ECO:0007669"/>
    <property type="project" value="UniProtKB-KW"/>
</dbReference>
<dbReference type="GO" id="GO:0005840">
    <property type="term" value="C:ribosome"/>
    <property type="evidence" value="ECO:0007669"/>
    <property type="project" value="UniProtKB-KW"/>
</dbReference>
<dbReference type="GO" id="GO:0003735">
    <property type="term" value="F:structural constituent of ribosome"/>
    <property type="evidence" value="ECO:0007669"/>
    <property type="project" value="InterPro"/>
</dbReference>
<dbReference type="GO" id="GO:0006412">
    <property type="term" value="P:translation"/>
    <property type="evidence" value="ECO:0007669"/>
    <property type="project" value="UniProtKB-UniRule"/>
</dbReference>
<dbReference type="Gene3D" id="2.20.28.120">
    <property type="entry name" value="Ribosomal protein L33"/>
    <property type="match status" value="1"/>
</dbReference>
<dbReference type="HAMAP" id="MF_00294">
    <property type="entry name" value="Ribosomal_bL33"/>
    <property type="match status" value="1"/>
</dbReference>
<dbReference type="InterPro" id="IPR001705">
    <property type="entry name" value="Ribosomal_bL33"/>
</dbReference>
<dbReference type="InterPro" id="IPR018264">
    <property type="entry name" value="Ribosomal_bL33_CS"/>
</dbReference>
<dbReference type="InterPro" id="IPR038584">
    <property type="entry name" value="Ribosomal_bL33_sf"/>
</dbReference>
<dbReference type="InterPro" id="IPR011332">
    <property type="entry name" value="Ribosomal_zn-bd"/>
</dbReference>
<dbReference type="NCBIfam" id="NF001764">
    <property type="entry name" value="PRK00504.1"/>
    <property type="match status" value="1"/>
</dbReference>
<dbReference type="NCBIfam" id="NF001860">
    <property type="entry name" value="PRK00595.1"/>
    <property type="match status" value="1"/>
</dbReference>
<dbReference type="NCBIfam" id="TIGR01023">
    <property type="entry name" value="rpmG_bact"/>
    <property type="match status" value="1"/>
</dbReference>
<dbReference type="PANTHER" id="PTHR43168">
    <property type="entry name" value="50S RIBOSOMAL PROTEIN L33, CHLOROPLASTIC"/>
    <property type="match status" value="1"/>
</dbReference>
<dbReference type="PANTHER" id="PTHR43168:SF2">
    <property type="entry name" value="LARGE RIBOSOMAL SUBUNIT PROTEIN BL33C"/>
    <property type="match status" value="1"/>
</dbReference>
<dbReference type="Pfam" id="PF00471">
    <property type="entry name" value="Ribosomal_L33"/>
    <property type="match status" value="1"/>
</dbReference>
<dbReference type="SUPFAM" id="SSF57829">
    <property type="entry name" value="Zn-binding ribosomal proteins"/>
    <property type="match status" value="1"/>
</dbReference>
<dbReference type="PROSITE" id="PS00582">
    <property type="entry name" value="RIBOSOMAL_L33"/>
    <property type="match status" value="1"/>
</dbReference>
<evidence type="ECO:0000255" key="1">
    <source>
        <dbReference type="HAMAP-Rule" id="MF_00294"/>
    </source>
</evidence>
<name>RL332_OCEIH</name>
<feature type="chain" id="PRO_0000356596" description="Large ribosomal subunit protein bL33B">
    <location>
        <begin position="1"/>
        <end position="49"/>
    </location>
</feature>
<proteinExistence type="inferred from homology"/>
<keyword id="KW-1185">Reference proteome</keyword>
<keyword id="KW-0687">Ribonucleoprotein</keyword>
<keyword id="KW-0689">Ribosomal protein</keyword>
<protein>
    <recommendedName>
        <fullName evidence="1">Large ribosomal subunit protein bL33B</fullName>
    </recommendedName>
    <alternativeName>
        <fullName evidence="1">50S ribosomal protein L33 2</fullName>
    </alternativeName>
</protein>